<organism>
    <name type="scientific">Arabidopsis thaliana</name>
    <name type="common">Mouse-ear cress</name>
    <dbReference type="NCBI Taxonomy" id="3702"/>
    <lineage>
        <taxon>Eukaryota</taxon>
        <taxon>Viridiplantae</taxon>
        <taxon>Streptophyta</taxon>
        <taxon>Embryophyta</taxon>
        <taxon>Tracheophyta</taxon>
        <taxon>Spermatophyta</taxon>
        <taxon>Magnoliopsida</taxon>
        <taxon>eudicotyledons</taxon>
        <taxon>Gunneridae</taxon>
        <taxon>Pentapetalae</taxon>
        <taxon>rosids</taxon>
        <taxon>malvids</taxon>
        <taxon>Brassicales</taxon>
        <taxon>Brassicaceae</taxon>
        <taxon>Camelineae</taxon>
        <taxon>Arabidopsis</taxon>
    </lineage>
</organism>
<feature type="chain" id="PRO_0000101844" description="HVA22-like protein j">
    <location>
        <begin position="1"/>
        <end position="258"/>
    </location>
</feature>
<feature type="region of interest" description="Disordered" evidence="1">
    <location>
        <begin position="153"/>
        <end position="258"/>
    </location>
</feature>
<feature type="compositionally biased region" description="Polar residues" evidence="1">
    <location>
        <begin position="156"/>
        <end position="169"/>
    </location>
</feature>
<feature type="compositionally biased region" description="Pro residues" evidence="1">
    <location>
        <begin position="206"/>
        <end position="215"/>
    </location>
</feature>
<feature type="sequence conflict" description="In Ref. 3; BAC42894." evidence="2" ref="3">
    <original>Q</original>
    <variation>R</variation>
    <location>
        <position position="100"/>
    </location>
</feature>
<feature type="sequence conflict" description="In Ref. 4; AAM61696." evidence="2" ref="4">
    <original>R</original>
    <variation>K</variation>
    <location>
        <position position="202"/>
    </location>
</feature>
<keyword id="KW-1185">Reference proteome</keyword>
<accession>Q8GXE9</accession>
<accession>Q8LEZ1</accession>
<accession>Q9SJ48</accession>
<evidence type="ECO:0000256" key="1">
    <source>
        <dbReference type="SAM" id="MobiDB-lite"/>
    </source>
</evidence>
<evidence type="ECO:0000305" key="2"/>
<protein>
    <recommendedName>
        <fullName>HVA22-like protein j</fullName>
        <shortName>AtHVA22j</shortName>
    </recommendedName>
</protein>
<reference key="1">
    <citation type="journal article" date="1999" name="Nature">
        <title>Sequence and analysis of chromosome 2 of the plant Arabidopsis thaliana.</title>
        <authorList>
            <person name="Lin X."/>
            <person name="Kaul S."/>
            <person name="Rounsley S.D."/>
            <person name="Shea T.P."/>
            <person name="Benito M.-I."/>
            <person name="Town C.D."/>
            <person name="Fujii C.Y."/>
            <person name="Mason T.M."/>
            <person name="Bowman C.L."/>
            <person name="Barnstead M.E."/>
            <person name="Feldblyum T.V."/>
            <person name="Buell C.R."/>
            <person name="Ketchum K.A."/>
            <person name="Lee J.J."/>
            <person name="Ronning C.M."/>
            <person name="Koo H.L."/>
            <person name="Moffat K.S."/>
            <person name="Cronin L.A."/>
            <person name="Shen M."/>
            <person name="Pai G."/>
            <person name="Van Aken S."/>
            <person name="Umayam L."/>
            <person name="Tallon L.J."/>
            <person name="Gill J.E."/>
            <person name="Adams M.D."/>
            <person name="Carrera A.J."/>
            <person name="Creasy T.H."/>
            <person name="Goodman H.M."/>
            <person name="Somerville C.R."/>
            <person name="Copenhaver G.P."/>
            <person name="Preuss D."/>
            <person name="Nierman W.C."/>
            <person name="White O."/>
            <person name="Eisen J.A."/>
            <person name="Salzberg S.L."/>
            <person name="Fraser C.M."/>
            <person name="Venter J.C."/>
        </authorList>
    </citation>
    <scope>NUCLEOTIDE SEQUENCE [LARGE SCALE GENOMIC DNA]</scope>
    <source>
        <strain>cv. Columbia</strain>
    </source>
</reference>
<reference key="2">
    <citation type="journal article" date="2017" name="Plant J.">
        <title>Araport11: a complete reannotation of the Arabidopsis thaliana reference genome.</title>
        <authorList>
            <person name="Cheng C.Y."/>
            <person name="Krishnakumar V."/>
            <person name="Chan A.P."/>
            <person name="Thibaud-Nissen F."/>
            <person name="Schobel S."/>
            <person name="Town C.D."/>
        </authorList>
    </citation>
    <scope>GENOME REANNOTATION</scope>
    <source>
        <strain>cv. Columbia</strain>
    </source>
</reference>
<reference key="3">
    <citation type="journal article" date="2002" name="Science">
        <title>Functional annotation of a full-length Arabidopsis cDNA collection.</title>
        <authorList>
            <person name="Seki M."/>
            <person name="Narusaka M."/>
            <person name="Kamiya A."/>
            <person name="Ishida J."/>
            <person name="Satou M."/>
            <person name="Sakurai T."/>
            <person name="Nakajima M."/>
            <person name="Enju A."/>
            <person name="Akiyama K."/>
            <person name="Oono Y."/>
            <person name="Muramatsu M."/>
            <person name="Hayashizaki Y."/>
            <person name="Kawai J."/>
            <person name="Carninci P."/>
            <person name="Itoh M."/>
            <person name="Ishii Y."/>
            <person name="Arakawa T."/>
            <person name="Shibata K."/>
            <person name="Shinagawa A."/>
            <person name="Shinozaki K."/>
        </authorList>
    </citation>
    <scope>NUCLEOTIDE SEQUENCE [LARGE SCALE MRNA]</scope>
    <source>
        <strain>cv. Columbia</strain>
    </source>
</reference>
<reference key="4">
    <citation type="journal article" date="2003" name="Science">
        <title>Empirical analysis of transcriptional activity in the Arabidopsis genome.</title>
        <authorList>
            <person name="Yamada K."/>
            <person name="Lim J."/>
            <person name="Dale J.M."/>
            <person name="Chen H."/>
            <person name="Shinn P."/>
            <person name="Palm C.J."/>
            <person name="Southwick A.M."/>
            <person name="Wu H.C."/>
            <person name="Kim C.J."/>
            <person name="Nguyen M."/>
            <person name="Pham P.K."/>
            <person name="Cheuk R.F."/>
            <person name="Karlin-Newmann G."/>
            <person name="Liu S.X."/>
            <person name="Lam B."/>
            <person name="Sakano H."/>
            <person name="Wu T."/>
            <person name="Yu G."/>
            <person name="Miranda M."/>
            <person name="Quach H.L."/>
            <person name="Tripp M."/>
            <person name="Chang C.H."/>
            <person name="Lee J.M."/>
            <person name="Toriumi M.J."/>
            <person name="Chan M.M."/>
            <person name="Tang C.C."/>
            <person name="Onodera C.S."/>
            <person name="Deng J.M."/>
            <person name="Akiyama K."/>
            <person name="Ansari Y."/>
            <person name="Arakawa T."/>
            <person name="Banh J."/>
            <person name="Banno F."/>
            <person name="Bowser L."/>
            <person name="Brooks S.Y."/>
            <person name="Carninci P."/>
            <person name="Chao Q."/>
            <person name="Choy N."/>
            <person name="Enju A."/>
            <person name="Goldsmith A.D."/>
            <person name="Gurjal M."/>
            <person name="Hansen N.F."/>
            <person name="Hayashizaki Y."/>
            <person name="Johnson-Hopson C."/>
            <person name="Hsuan V.W."/>
            <person name="Iida K."/>
            <person name="Karnes M."/>
            <person name="Khan S."/>
            <person name="Koesema E."/>
            <person name="Ishida J."/>
            <person name="Jiang P.X."/>
            <person name="Jones T."/>
            <person name="Kawai J."/>
            <person name="Kamiya A."/>
            <person name="Meyers C."/>
            <person name="Nakajima M."/>
            <person name="Narusaka M."/>
            <person name="Seki M."/>
            <person name="Sakurai T."/>
            <person name="Satou M."/>
            <person name="Tamse R."/>
            <person name="Vaysberg M."/>
            <person name="Wallender E.K."/>
            <person name="Wong C."/>
            <person name="Yamamura Y."/>
            <person name="Yuan S."/>
            <person name="Shinozaki K."/>
            <person name="Davis R.W."/>
            <person name="Theologis A."/>
            <person name="Ecker J.R."/>
        </authorList>
    </citation>
    <scope>NUCLEOTIDE SEQUENCE [LARGE SCALE MRNA]</scope>
    <source>
        <strain>cv. Columbia</strain>
    </source>
</reference>
<name>HA22J_ARATH</name>
<comment type="similarity">
    <text evidence="2">Belongs to the DP1 family.</text>
</comment>
<gene>
    <name type="primary">HVA22J</name>
    <name type="ordered locus">At2g36020</name>
    <name type="ORF">F11F19.7</name>
</gene>
<dbReference type="EMBL" id="AC007017">
    <property type="protein sequence ID" value="AAD21455.2"/>
    <property type="molecule type" value="Genomic_DNA"/>
</dbReference>
<dbReference type="EMBL" id="CP002685">
    <property type="protein sequence ID" value="AEC09194.1"/>
    <property type="molecule type" value="Genomic_DNA"/>
</dbReference>
<dbReference type="EMBL" id="AK118276">
    <property type="protein sequence ID" value="BAC42894.1"/>
    <property type="molecule type" value="mRNA"/>
</dbReference>
<dbReference type="EMBL" id="AY085143">
    <property type="protein sequence ID" value="AAM61696.1"/>
    <property type="molecule type" value="mRNA"/>
</dbReference>
<dbReference type="PIR" id="H84775">
    <property type="entry name" value="H84775"/>
</dbReference>
<dbReference type="RefSeq" id="NP_565832.1">
    <property type="nucleotide sequence ID" value="NM_129161.3"/>
</dbReference>
<dbReference type="BioGRID" id="3519">
    <property type="interactions" value="5"/>
</dbReference>
<dbReference type="FunCoup" id="Q8GXE9">
    <property type="interactions" value="772"/>
</dbReference>
<dbReference type="STRING" id="3702.Q8GXE9"/>
<dbReference type="GlyGen" id="Q8GXE9">
    <property type="glycosylation" value="2 sites"/>
</dbReference>
<dbReference type="PaxDb" id="3702-AT2G36020.1"/>
<dbReference type="ProteomicsDB" id="230380"/>
<dbReference type="EnsemblPlants" id="AT2G36020.1">
    <property type="protein sequence ID" value="AT2G36020.1"/>
    <property type="gene ID" value="AT2G36020"/>
</dbReference>
<dbReference type="GeneID" id="818175"/>
<dbReference type="Gramene" id="AT2G36020.1">
    <property type="protein sequence ID" value="AT2G36020.1"/>
    <property type="gene ID" value="AT2G36020"/>
</dbReference>
<dbReference type="KEGG" id="ath:AT2G36020"/>
<dbReference type="Araport" id="AT2G36020"/>
<dbReference type="TAIR" id="AT2G36020">
    <property type="gene designation" value="HVA22J"/>
</dbReference>
<dbReference type="eggNOG" id="KOG1726">
    <property type="taxonomic scope" value="Eukaryota"/>
</dbReference>
<dbReference type="HOGENOM" id="CLU_028431_5_1_1"/>
<dbReference type="InParanoid" id="Q8GXE9"/>
<dbReference type="OMA" id="PYMAQHE"/>
<dbReference type="OrthoDB" id="434647at2759"/>
<dbReference type="PhylomeDB" id="Q8GXE9"/>
<dbReference type="PRO" id="PR:Q8GXE9"/>
<dbReference type="Proteomes" id="UP000006548">
    <property type="component" value="Chromosome 2"/>
</dbReference>
<dbReference type="ExpressionAtlas" id="Q8GXE9">
    <property type="expression patterns" value="baseline and differential"/>
</dbReference>
<dbReference type="InterPro" id="IPR004345">
    <property type="entry name" value="TB2_DP1_HVA22"/>
</dbReference>
<dbReference type="PANTHER" id="PTHR12300:SF162">
    <property type="entry name" value="HVA22-LIKE PROTEIN J"/>
    <property type="match status" value="1"/>
</dbReference>
<dbReference type="PANTHER" id="PTHR12300">
    <property type="entry name" value="HVA22-LIKE PROTEINS"/>
    <property type="match status" value="1"/>
</dbReference>
<dbReference type="Pfam" id="PF03134">
    <property type="entry name" value="TB2_DP1_HVA22"/>
    <property type="match status" value="1"/>
</dbReference>
<proteinExistence type="evidence at transcript level"/>
<sequence length="258" mass="29550">MLGDFIIRLLVLILGYTYPAFECFKTVEKNKVDIEELRFWCQYWILLALISSFERVGDFFISWLPLYGEMKVVFFVYLWYPKTKGTRHVYETLLKPYMAQHETEIDRKIMELRARAWDFFIFYFNNFAQAGQSTLIQGFQYVLAQSVRFSAAAANQPPTERNVNMNAQSPVEMDNDPPSPRAPRPLNKSLSALRSLEKQTSRGRKWPPPTPPPTPGRDSAGTFNGDDGVNIPDTIPGSPLTDARAKLRRSNSRTQPAA</sequence>